<accession>P08716</accession>
<gene>
    <name type="primary">hlyB</name>
</gene>
<feature type="chain" id="PRO_0000092371" description="Alpha-hemolysin translocation ATP-binding protein HlyB">
    <location>
        <begin position="1"/>
        <end position="707"/>
    </location>
</feature>
<feature type="transmembrane region" description="Helical" evidence="3">
    <location>
        <begin position="158"/>
        <end position="178"/>
    </location>
</feature>
<feature type="transmembrane region" description="Helical" evidence="3">
    <location>
        <begin position="191"/>
        <end position="211"/>
    </location>
</feature>
<feature type="transmembrane region" description="Helical" evidence="3">
    <location>
        <begin position="269"/>
        <end position="289"/>
    </location>
</feature>
<feature type="transmembrane region" description="Helical" evidence="3">
    <location>
        <begin position="295"/>
        <end position="315"/>
    </location>
</feature>
<feature type="transmembrane region" description="Helical" evidence="3">
    <location>
        <begin position="388"/>
        <end position="408"/>
    </location>
</feature>
<feature type="domain" description="Peptidase C39" evidence="1">
    <location>
        <begin position="3"/>
        <end position="125"/>
    </location>
</feature>
<feature type="domain" description="ABC transmembrane type-1" evidence="3">
    <location>
        <begin position="154"/>
        <end position="436"/>
    </location>
</feature>
<feature type="domain" description="ABC transporter" evidence="1 2">
    <location>
        <begin position="468"/>
        <end position="703"/>
    </location>
</feature>
<feature type="active site" evidence="1">
    <location>
        <position position="83"/>
    </location>
</feature>
<feature type="binding site" evidence="1 2">
    <location>
        <begin position="502"/>
        <end position="509"/>
    </location>
    <ligand>
        <name>ATP</name>
        <dbReference type="ChEBI" id="CHEBI:30616"/>
    </ligand>
</feature>
<feature type="strand" evidence="7">
    <location>
        <begin position="467"/>
        <end position="478"/>
    </location>
</feature>
<feature type="strand" evidence="7">
    <location>
        <begin position="483"/>
        <end position="493"/>
    </location>
</feature>
<feature type="strand" evidence="7">
    <location>
        <begin position="497"/>
        <end position="501"/>
    </location>
</feature>
<feature type="helix" evidence="7">
    <location>
        <begin position="508"/>
        <end position="515"/>
    </location>
</feature>
<feature type="strand" evidence="7">
    <location>
        <begin position="522"/>
        <end position="528"/>
    </location>
</feature>
<feature type="turn" evidence="7">
    <location>
        <begin position="533"/>
        <end position="535"/>
    </location>
</feature>
<feature type="helix" evidence="7">
    <location>
        <begin position="538"/>
        <end position="544"/>
    </location>
</feature>
<feature type="strand" evidence="7">
    <location>
        <begin position="545"/>
        <end position="548"/>
    </location>
</feature>
<feature type="strand" evidence="6">
    <location>
        <begin position="556"/>
        <end position="558"/>
    </location>
</feature>
<feature type="helix" evidence="7">
    <location>
        <begin position="559"/>
        <end position="563"/>
    </location>
</feature>
<feature type="turn" evidence="7">
    <location>
        <begin position="564"/>
        <end position="566"/>
    </location>
</feature>
<feature type="helix" evidence="7">
    <location>
        <begin position="572"/>
        <end position="581"/>
    </location>
</feature>
<feature type="helix" evidence="7">
    <location>
        <begin position="585"/>
        <end position="589"/>
    </location>
</feature>
<feature type="strand" evidence="6">
    <location>
        <begin position="591"/>
        <end position="593"/>
    </location>
</feature>
<feature type="helix" evidence="7">
    <location>
        <begin position="594"/>
        <end position="596"/>
    </location>
</feature>
<feature type="strand" evidence="8">
    <location>
        <begin position="598"/>
        <end position="600"/>
    </location>
</feature>
<feature type="turn" evidence="7">
    <location>
        <begin position="601"/>
        <end position="603"/>
    </location>
</feature>
<feature type="helix" evidence="7">
    <location>
        <begin position="608"/>
        <end position="620"/>
    </location>
</feature>
<feature type="strand" evidence="7">
    <location>
        <begin position="625"/>
        <end position="629"/>
    </location>
</feature>
<feature type="turn" evidence="5">
    <location>
        <begin position="632"/>
        <end position="635"/>
    </location>
</feature>
<feature type="helix" evidence="7">
    <location>
        <begin position="638"/>
        <end position="652"/>
    </location>
</feature>
<feature type="strand" evidence="7">
    <location>
        <begin position="655"/>
        <end position="660"/>
    </location>
</feature>
<feature type="helix" evidence="7">
    <location>
        <begin position="664"/>
        <end position="667"/>
    </location>
</feature>
<feature type="strand" evidence="7">
    <location>
        <begin position="670"/>
        <end position="677"/>
    </location>
</feature>
<feature type="strand" evidence="7">
    <location>
        <begin position="680"/>
        <end position="685"/>
    </location>
</feature>
<feature type="helix" evidence="7">
    <location>
        <begin position="687"/>
        <end position="691"/>
    </location>
</feature>
<feature type="helix" evidence="7">
    <location>
        <begin position="697"/>
        <end position="705"/>
    </location>
</feature>
<geneLocation type="plasmid">
    <name>IncI2 pHLY152</name>
</geneLocation>
<dbReference type="EMBL" id="M14107">
    <property type="protein sequence ID" value="AAA98234.1"/>
    <property type="molecule type" value="Genomic_DNA"/>
</dbReference>
<dbReference type="PIR" id="S10057">
    <property type="entry name" value="S10057"/>
</dbReference>
<dbReference type="PDB" id="1MT0">
    <property type="method" value="X-ray"/>
    <property type="resolution" value="2.60 A"/>
    <property type="chains" value="A=467-707"/>
</dbReference>
<dbReference type="PDB" id="1XEF">
    <property type="method" value="X-ray"/>
    <property type="resolution" value="2.50 A"/>
    <property type="chains" value="A/B/C/D=467-707"/>
</dbReference>
<dbReference type="PDB" id="2FF7">
    <property type="method" value="X-ray"/>
    <property type="resolution" value="1.60 A"/>
    <property type="chains" value="A=467-707"/>
</dbReference>
<dbReference type="PDB" id="2FFA">
    <property type="method" value="X-ray"/>
    <property type="resolution" value="1.70 A"/>
    <property type="chains" value="A=467-707"/>
</dbReference>
<dbReference type="PDB" id="2FFB">
    <property type="method" value="X-ray"/>
    <property type="resolution" value="1.90 A"/>
    <property type="chains" value="A=467-707"/>
</dbReference>
<dbReference type="PDB" id="2FGJ">
    <property type="method" value="X-ray"/>
    <property type="resolution" value="2.60 A"/>
    <property type="chains" value="A/B/C/D=467-707"/>
</dbReference>
<dbReference type="PDB" id="2FGK">
    <property type="method" value="X-ray"/>
    <property type="resolution" value="2.70 A"/>
    <property type="chains" value="A/B/C/D=467-707"/>
</dbReference>
<dbReference type="PDB" id="2PMK">
    <property type="method" value="X-ray"/>
    <property type="resolution" value="1.60 A"/>
    <property type="chains" value="A=467-707"/>
</dbReference>
<dbReference type="PDB" id="3B5J">
    <property type="method" value="X-ray"/>
    <property type="resolution" value="2.00 A"/>
    <property type="chains" value="A=467-707"/>
</dbReference>
<dbReference type="PDBsum" id="1MT0"/>
<dbReference type="PDBsum" id="1XEF"/>
<dbReference type="PDBsum" id="2FF7"/>
<dbReference type="PDBsum" id="2FFA"/>
<dbReference type="PDBsum" id="2FFB"/>
<dbReference type="PDBsum" id="2FGJ"/>
<dbReference type="PDBsum" id="2FGK"/>
<dbReference type="PDBsum" id="2PMK"/>
<dbReference type="PDBsum" id="3B5J"/>
<dbReference type="EMDB" id="EMD-8465"/>
<dbReference type="EMDB" id="EMD-8669"/>
<dbReference type="EMDB" id="EMD-8670"/>
<dbReference type="EMDB" id="EMD-8671"/>
<dbReference type="SMR" id="P08716"/>
<dbReference type="DIP" id="DIP-28120N"/>
<dbReference type="TCDB" id="3.A.1.109.1">
    <property type="family name" value="the atp-binding cassette (abc) superfamily"/>
</dbReference>
<dbReference type="EvolutionaryTrace" id="P08716"/>
<dbReference type="GO" id="GO:0005886">
    <property type="term" value="C:plasma membrane"/>
    <property type="evidence" value="ECO:0007669"/>
    <property type="project" value="UniProtKB-SubCell"/>
</dbReference>
<dbReference type="GO" id="GO:0030256">
    <property type="term" value="C:type I protein secretion system complex"/>
    <property type="evidence" value="ECO:0007669"/>
    <property type="project" value="InterPro"/>
</dbReference>
<dbReference type="GO" id="GO:0015421">
    <property type="term" value="F:ABC-type oligopeptide transporter activity"/>
    <property type="evidence" value="ECO:0007669"/>
    <property type="project" value="TreeGrafter"/>
</dbReference>
<dbReference type="GO" id="GO:0005524">
    <property type="term" value="F:ATP binding"/>
    <property type="evidence" value="ECO:0007669"/>
    <property type="project" value="UniProtKB-KW"/>
</dbReference>
<dbReference type="GO" id="GO:0016887">
    <property type="term" value="F:ATP hydrolysis activity"/>
    <property type="evidence" value="ECO:0007669"/>
    <property type="project" value="InterPro"/>
</dbReference>
<dbReference type="GO" id="GO:0008233">
    <property type="term" value="F:peptidase activity"/>
    <property type="evidence" value="ECO:0007669"/>
    <property type="project" value="InterPro"/>
</dbReference>
<dbReference type="GO" id="GO:0030253">
    <property type="term" value="P:protein secretion by the type I secretion system"/>
    <property type="evidence" value="ECO:0007669"/>
    <property type="project" value="InterPro"/>
</dbReference>
<dbReference type="GO" id="GO:0006508">
    <property type="term" value="P:proteolysis"/>
    <property type="evidence" value="ECO:0007669"/>
    <property type="project" value="InterPro"/>
</dbReference>
<dbReference type="CDD" id="cd18588">
    <property type="entry name" value="ABC_6TM_CyaB_HlyB_like"/>
    <property type="match status" value="1"/>
</dbReference>
<dbReference type="CDD" id="cd03252">
    <property type="entry name" value="ABCC_Hemolysin"/>
    <property type="match status" value="1"/>
</dbReference>
<dbReference type="CDD" id="cd02417">
    <property type="entry name" value="Peptidase_C39_likeA"/>
    <property type="match status" value="1"/>
</dbReference>
<dbReference type="FunFam" id="3.40.50.300:FF:000299">
    <property type="entry name" value="ABC transporter ATP-binding protein/permease"/>
    <property type="match status" value="1"/>
</dbReference>
<dbReference type="FunFam" id="1.20.1560.10:FF:000056">
    <property type="entry name" value="Alpha-hemolysin translocation ATP-binding protein HlyB"/>
    <property type="match status" value="1"/>
</dbReference>
<dbReference type="FunFam" id="3.90.70.10:FF:000148">
    <property type="entry name" value="Alpha-hemolysin translocation ATP-binding protein HlyB"/>
    <property type="match status" value="1"/>
</dbReference>
<dbReference type="Gene3D" id="1.20.1560.10">
    <property type="entry name" value="ABC transporter type 1, transmembrane domain"/>
    <property type="match status" value="1"/>
</dbReference>
<dbReference type="Gene3D" id="3.90.70.10">
    <property type="entry name" value="Cysteine proteinases"/>
    <property type="match status" value="1"/>
</dbReference>
<dbReference type="Gene3D" id="3.40.50.300">
    <property type="entry name" value="P-loop containing nucleotide triphosphate hydrolases"/>
    <property type="match status" value="1"/>
</dbReference>
<dbReference type="InterPro" id="IPR003593">
    <property type="entry name" value="AAA+_ATPase"/>
</dbReference>
<dbReference type="InterPro" id="IPR011527">
    <property type="entry name" value="ABC1_TM_dom"/>
</dbReference>
<dbReference type="InterPro" id="IPR036640">
    <property type="entry name" value="ABC1_TM_sf"/>
</dbReference>
<dbReference type="InterPro" id="IPR003439">
    <property type="entry name" value="ABC_transporter-like_ATP-bd"/>
</dbReference>
<dbReference type="InterPro" id="IPR017871">
    <property type="entry name" value="ABC_transporter-like_CS"/>
</dbReference>
<dbReference type="InterPro" id="IPR010132">
    <property type="entry name" value="ATPase_T1SS_HlyB"/>
</dbReference>
<dbReference type="InterPro" id="IPR027417">
    <property type="entry name" value="P-loop_NTPase"/>
</dbReference>
<dbReference type="InterPro" id="IPR005074">
    <property type="entry name" value="Peptidase_C39"/>
</dbReference>
<dbReference type="InterPro" id="IPR039395">
    <property type="entry name" value="Peptidase_C39-like_A"/>
</dbReference>
<dbReference type="InterPro" id="IPR039421">
    <property type="entry name" value="Type_1_exporter"/>
</dbReference>
<dbReference type="NCBIfam" id="TIGR01846">
    <property type="entry name" value="type_I_sec_HlyB"/>
    <property type="match status" value="1"/>
</dbReference>
<dbReference type="PANTHER" id="PTHR43394:SF1">
    <property type="entry name" value="ATP-BINDING CASSETTE SUB-FAMILY B MEMBER 10, MITOCHONDRIAL"/>
    <property type="match status" value="1"/>
</dbReference>
<dbReference type="PANTHER" id="PTHR43394">
    <property type="entry name" value="ATP-DEPENDENT PERMEASE MDL1, MITOCHONDRIAL"/>
    <property type="match status" value="1"/>
</dbReference>
<dbReference type="Pfam" id="PF00664">
    <property type="entry name" value="ABC_membrane"/>
    <property type="match status" value="1"/>
</dbReference>
<dbReference type="Pfam" id="PF00005">
    <property type="entry name" value="ABC_tran"/>
    <property type="match status" value="1"/>
</dbReference>
<dbReference type="Pfam" id="PF03412">
    <property type="entry name" value="Peptidase_C39"/>
    <property type="match status" value="1"/>
</dbReference>
<dbReference type="SMART" id="SM00382">
    <property type="entry name" value="AAA"/>
    <property type="match status" value="1"/>
</dbReference>
<dbReference type="SUPFAM" id="SSF90123">
    <property type="entry name" value="ABC transporter transmembrane region"/>
    <property type="match status" value="1"/>
</dbReference>
<dbReference type="SUPFAM" id="SSF52540">
    <property type="entry name" value="P-loop containing nucleoside triphosphate hydrolases"/>
    <property type="match status" value="1"/>
</dbReference>
<dbReference type="PROSITE" id="PS50929">
    <property type="entry name" value="ABC_TM1F"/>
    <property type="match status" value="1"/>
</dbReference>
<dbReference type="PROSITE" id="PS00211">
    <property type="entry name" value="ABC_TRANSPORTER_1"/>
    <property type="match status" value="1"/>
</dbReference>
<dbReference type="PROSITE" id="PS50893">
    <property type="entry name" value="ABC_TRANSPORTER_2"/>
    <property type="match status" value="1"/>
</dbReference>
<dbReference type="PROSITE" id="PS50990">
    <property type="entry name" value="PEPTIDASE_C39"/>
    <property type="match status" value="1"/>
</dbReference>
<name>HLYBP_ECOLX</name>
<organism>
    <name type="scientific">Escherichia coli</name>
    <dbReference type="NCBI Taxonomy" id="562"/>
    <lineage>
        <taxon>Bacteria</taxon>
        <taxon>Pseudomonadati</taxon>
        <taxon>Pseudomonadota</taxon>
        <taxon>Gammaproteobacteria</taxon>
        <taxon>Enterobacterales</taxon>
        <taxon>Enterobacteriaceae</taxon>
        <taxon>Escherichia</taxon>
    </lineage>
</organism>
<protein>
    <recommendedName>
        <fullName>Alpha-hemolysin translocation ATP-binding protein HlyB</fullName>
    </recommendedName>
</protein>
<evidence type="ECO:0000255" key="1">
    <source>
        <dbReference type="PROSITE-ProRule" id="PRU00362"/>
    </source>
</evidence>
<evidence type="ECO:0000255" key="2">
    <source>
        <dbReference type="PROSITE-ProRule" id="PRU00434"/>
    </source>
</evidence>
<evidence type="ECO:0000255" key="3">
    <source>
        <dbReference type="PROSITE-ProRule" id="PRU00441"/>
    </source>
</evidence>
<evidence type="ECO:0000305" key="4"/>
<evidence type="ECO:0007829" key="5">
    <source>
        <dbReference type="PDB" id="1MT0"/>
    </source>
</evidence>
<evidence type="ECO:0007829" key="6">
    <source>
        <dbReference type="PDB" id="1XEF"/>
    </source>
</evidence>
<evidence type="ECO:0007829" key="7">
    <source>
        <dbReference type="PDB" id="2FF7"/>
    </source>
</evidence>
<evidence type="ECO:0007829" key="8">
    <source>
        <dbReference type="PDB" id="3B5J"/>
    </source>
</evidence>
<comment type="function">
    <text>Part of the ABC transporter complex HlyBD involved in hemolysin export. Transmembrane domains (TMD) form a pore in the inner membrane and the ATP-binding domain (NBD) is responsible for energy generation.</text>
</comment>
<comment type="subunit">
    <text>Homodimer.</text>
</comment>
<comment type="subcellular location">
    <subcellularLocation>
        <location evidence="4">Cell inner membrane</location>
        <topology evidence="4">Multi-pass membrane protein</topology>
    </subcellularLocation>
</comment>
<comment type="domain">
    <text>In HlyB the peptidase C39 domain, the ATP-binding domain (NBD) and the transmembrane domain (TMD) are fused.</text>
</comment>
<comment type="miscellaneous">
    <text>The complex HlyBD-TolC (OMF) forms a single transport channel across the two membranes, allowing direct export of alpha-hemolysin. This channel is involved in type 1 secretion system.</text>
</comment>
<comment type="similarity">
    <text evidence="4">Belongs to the ABC transporter superfamily. Protein-1 exporter (TC 3.A.1.109) family.</text>
</comment>
<comment type="caution">
    <text evidence="4">Tyr-9 is present instead of the conserved Cys which is expected to be the active site residue of peptidase C39. Thus this protein is presumed to be without peptidase activity.</text>
</comment>
<reference key="1">
    <citation type="journal article" date="1986" name="FEMS Microbiol. Lett.">
        <title>Nucleotide sequence of a plasmid-encoded hemolysin determinant and its comparison with a corresponding chromosomal hemolysin sequence.</title>
        <authorList>
            <person name="Hess J."/>
            <person name="Wels W."/>
            <person name="Vogel M."/>
            <person name="Goebel W."/>
        </authorList>
    </citation>
    <scope>NUCLEOTIDE SEQUENCE [GENOMIC DNA]</scope>
</reference>
<reference key="2">
    <citation type="journal article" date="1990" name="Proc. Natl. Acad. Sci. U.S.A.">
        <title>TolC, an Escherichia coli outer membrane protein required for hemolysin secretion.</title>
        <authorList>
            <person name="Wandersman C."/>
            <person name="Delepelaire P."/>
        </authorList>
    </citation>
    <scope>REQUIREMENT OF TOLC FOR HEMOLYSIN EXPORT</scope>
</reference>
<reference key="3">
    <citation type="journal article" date="1992" name="Mol. Gen. Genet.">
        <title>Topological and functional studies on HlyB of Escherichia coli.</title>
        <authorList>
            <person name="Gentschev I."/>
            <person name="Goebel W."/>
        </authorList>
    </citation>
    <scope>TOPOLOGY</scope>
</reference>
<reference key="4">
    <citation type="journal article" date="1991" name="J. Mol. Biol.">
        <title>Analysis of the membrane organization of an Escherichia coli protein translocator, HlyB, a member of a large family of prokaryote and eukaryote surface transport proteins.</title>
        <authorList>
            <person name="Wang R.C."/>
            <person name="Seror S.J."/>
            <person name="Blight M."/>
            <person name="Pratt J.M."/>
            <person name="Broome-Smith J.K."/>
            <person name="Holland I.B."/>
        </authorList>
    </citation>
    <scope>TOPOLOGY</scope>
</reference>
<reference key="5">
    <citation type="journal article" date="2003" name="J. Mol. Biol.">
        <title>Crystal structure of the nucleotide-binding domain of the ABC-transporter haemolysin B: identification of a variable region within ABC helical domains.</title>
        <authorList>
            <person name="Schmitt L."/>
            <person name="Benabdelhak H."/>
            <person name="Blight M.A."/>
            <person name="Holland I.B."/>
            <person name="Stubbs M.T."/>
        </authorList>
    </citation>
    <scope>X-RAY CRYSTALLOGRAPHY (2.6 ANGSTROMS) OF 467-707</scope>
</reference>
<reference key="6">
    <citation type="journal article" date="1986" name="Curr. Top. Microbiol. Immunol.">
        <title>Secretion of haemolysin by Escherichia coli.</title>
        <authorList>
            <person name="Mackman N."/>
            <person name="Nicaud J.-M."/>
            <person name="Gray L."/>
            <person name="Holland I.B."/>
        </authorList>
    </citation>
    <scope>REVIEW</scope>
</reference>
<reference key="7">
    <citation type="book" date="2003" name="ABC proteins from bacteria to man">
        <title>Bacterial ABC transporters involved in protein translocation.</title>
        <editorList>
            <person name="Holland I.B."/>
            <person name="Cole S.P.C."/>
            <person name="Kuchler K."/>
            <person name="Higgins C.F."/>
        </editorList>
        <authorList>
            <person name="Holland I.B."/>
            <person name="Benabdelhak H."/>
            <person name="Young J."/>
            <person name="de Lima Pimenta A."/>
            <person name="Schmitt L."/>
            <person name="Blight M.A."/>
        </authorList>
    </citation>
    <scope>REVIEW</scope>
</reference>
<sequence length="707" mass="79673">MDSCHKIDYGLYALEILAQYHNVSVNPEEIKHRFDTDGTGLGLTSWLLAAKSLELKVKQVKKTIDRLNFIFLPALVWREDGRHFILTKISKEVNRYLIFDLEQRNPRVLEQSEFEALYQGHIILITSRSSVTGKLAKFDFTWFIPAIIKYRRIFIETLVVSVFLQLFALITPLFFQVVMDKVLVHRGFSTLNVITVALSVVVVFEIILSGLRTYIFAHSTSRIDVELGAKLFRHLLALPISYFESRRVGDTVARVRELDQIRNFLTGQALTSVLDLLFSLIFFAVMWYYSPKLTLVILFSLPCYAAWSVFISPILRRRLDDKFSRNADNQSFLVESVTAINTIKAMAVSPQMTNIWDKQLAGYVAAGFKVTVLATIGQQGIQLIQKTVMIINLWLGAHLVISGDLSIGQLIAFNMLAGQIVAPVIRLAQIWQDFQQVGISVTRLGDVLNSPTESYHGKLTLPEINGDITFRNIRFRYKPDSPVILDNINLSIKQGEVIGIVGRSGSGKSTLTKLIQRFYIPENGQVLIDGHDLALADPNWLRRQVGVVLQDNVLLNRSIIDNISLANPGMSVEKVIYAAKLAGAHDFISELREGYNTIVGEQGAGLSGGQRQRIAIARALVNNPKILIFDEATSALDYESEHVIMRNMHKICKGRTVIIIAHRLSTVKNADRIIVMEKGKIVEQGKHKELLSEPESLYSYLYQLQSD</sequence>
<keyword id="KW-0002">3D-structure</keyword>
<keyword id="KW-0067">ATP-binding</keyword>
<keyword id="KW-0997">Cell inner membrane</keyword>
<keyword id="KW-1003">Cell membrane</keyword>
<keyword id="KW-0378">Hydrolase</keyword>
<keyword id="KW-0472">Membrane</keyword>
<keyword id="KW-0547">Nucleotide-binding</keyword>
<keyword id="KW-0614">Plasmid</keyword>
<keyword id="KW-0812">Transmembrane</keyword>
<keyword id="KW-1133">Transmembrane helix</keyword>
<keyword id="KW-0813">Transport</keyword>
<proteinExistence type="evidence at protein level"/>